<comment type="function">
    <text evidence="6">Putative ferric-chelate reductases reduce Fe(3+) to Fe(2+) before its transport from the endosome to the cytoplasm.</text>
</comment>
<comment type="cofactor">
    <cofactor evidence="1">
        <name>heme b</name>
        <dbReference type="ChEBI" id="CHEBI:60344"/>
    </cofactor>
    <text evidence="1">Binds 2 heme b groups non-covalently.</text>
</comment>
<comment type="subcellular location">
    <subcellularLocation>
        <location evidence="7">Membrane</location>
        <topology evidence="7">Multi-pass membrane protein</topology>
    </subcellularLocation>
</comment>
<comment type="similarity">
    <text evidence="7">Belongs to the FRRS1 family.</text>
</comment>
<comment type="caution">
    <text evidence="7">The cytochrome b561 domain lacks the conserved His residue that binds iron in the heme. The reductase activity is therefore unsure in vivo.</text>
</comment>
<accession>Q8MSU3</accession>
<accession>Q9V7I1</accession>
<keyword id="KW-0249">Electron transport</keyword>
<keyword id="KW-0325">Glycoprotein</keyword>
<keyword id="KW-0408">Iron</keyword>
<keyword id="KW-0472">Membrane</keyword>
<keyword id="KW-0479">Metal-binding</keyword>
<keyword id="KW-0560">Oxidoreductase</keyword>
<keyword id="KW-1185">Reference proteome</keyword>
<keyword id="KW-0812">Transmembrane</keyword>
<keyword id="KW-1133">Transmembrane helix</keyword>
<keyword id="KW-0813">Transport</keyword>
<sequence length="647" mass="70285">MMQALTMRSWLATLVTALLAVAIWPDPGQSLPQGAPETVCDTMLPFHSGGSVLPQNSVSPFSVETSSSTLGQGQTLRVDLTGVPAGLSFGGYMIQARNRNPPHQIIGQFGPARDGTIKLMNCENSVNNSATHSNAGPKQQVILEWQSPVDFLGQVVFNATIAQSYNEFWVGVPSQPVQIVRRDLSAAPPLPTQSPSAPAGTTRAPYVPPSYVAPNNVVAVSSDPIYNGCGQSKNCFGFPDGCVATKSCTSITVVTVRGDVFEFEIQSGKGTNAAYVAVGLSDDAKMGDDLTTECVPENGRVNLYSSLTSASPYSAVRSNVNQNSARLLDASIVDGVIYCRVQRDAVTNVQGRTFDLRNGKYHLLVASGSSLKENSVGYHDIGRLPSAQPINLAEVQDLSGSSRLLIQLHGAFMIAAWIGTTSLGIIFARYFKQTWVGSQSCGTDQWFAWHRLLMVTTWSLTVAAYVLIWVELKQAVWHAHSIIGLITVILCFIQPIGALFRPGPNDKKRPYFNWGHWLGGNLAHILGIVTIFFSVKLPKAELPEWMDWILVSFVVVHVLVHLIFSIGGMASERHLSQRANTFQMGDMSHHQQHAMRNGMSMERKMDAPYAGMRKGLLGVYGVVLILFVTVLILLVVLAPIEQFLGKS</sequence>
<name>FRRS1_DROME</name>
<proteinExistence type="evidence at transcript level"/>
<protein>
    <recommendedName>
        <fullName>Putative ferric-chelate reductase 1 homolog</fullName>
        <shortName>DmSDR2</shortName>
        <ecNumber>1.-.-.-</ecNumber>
    </recommendedName>
</protein>
<evidence type="ECO:0000250" key="1">
    <source>
        <dbReference type="UniProtKB" id="Q53TN4"/>
    </source>
</evidence>
<evidence type="ECO:0000255" key="2"/>
<evidence type="ECO:0000255" key="3">
    <source>
        <dbReference type="PROSITE-ProRule" id="PRU00242"/>
    </source>
</evidence>
<evidence type="ECO:0000255" key="4">
    <source>
        <dbReference type="PROSITE-ProRule" id="PRU00246"/>
    </source>
</evidence>
<evidence type="ECO:0000255" key="5">
    <source>
        <dbReference type="PROSITE-ProRule" id="PRU00363"/>
    </source>
</evidence>
<evidence type="ECO:0000269" key="6">
    <source>
    </source>
</evidence>
<evidence type="ECO:0000305" key="7"/>
<feature type="chain" id="PRO_0000314847" description="Putative ferric-chelate reductase 1 homolog">
    <location>
        <begin position="1"/>
        <end position="647"/>
    </location>
</feature>
<feature type="transmembrane region" description="Helical; Name=1" evidence="2">
    <location>
        <begin position="10"/>
        <end position="30"/>
    </location>
</feature>
<feature type="transmembrane region" description="Helical; Name=2" evidence="2">
    <location>
        <begin position="408"/>
        <end position="428"/>
    </location>
</feature>
<feature type="transmembrane region" description="Helical; Name=3" evidence="2">
    <location>
        <begin position="452"/>
        <end position="472"/>
    </location>
</feature>
<feature type="transmembrane region" description="Helical; Name=4" evidence="2">
    <location>
        <begin position="480"/>
        <end position="500"/>
    </location>
</feature>
<feature type="transmembrane region" description="Helical; Name=5" evidence="2">
    <location>
        <begin position="515"/>
        <end position="535"/>
    </location>
</feature>
<feature type="transmembrane region" description="Helical; Name=6" evidence="2">
    <location>
        <begin position="548"/>
        <end position="568"/>
    </location>
</feature>
<feature type="transmembrane region" description="Helical; Name=7" evidence="2">
    <location>
        <begin position="616"/>
        <end position="636"/>
    </location>
</feature>
<feature type="domain" description="Reelin" evidence="5">
    <location>
        <begin position="25"/>
        <end position="195"/>
    </location>
</feature>
<feature type="domain" description="DOMON" evidence="4">
    <location>
        <begin position="245"/>
        <end position="368"/>
    </location>
</feature>
<feature type="domain" description="Cytochrome b561" evidence="3">
    <location>
        <begin position="372"/>
        <end position="570"/>
    </location>
</feature>
<feature type="binding site" description="axial binding residue" evidence="1">
    <location>
        <position position="409"/>
    </location>
    <ligand>
        <name>heme b</name>
        <dbReference type="ChEBI" id="CHEBI:60344"/>
        <label>1</label>
    </ligand>
    <ligandPart>
        <name>Fe</name>
        <dbReference type="ChEBI" id="CHEBI:18248"/>
    </ligandPart>
</feature>
<feature type="binding site" description="axial binding residue" evidence="1">
    <location>
        <position position="450"/>
    </location>
    <ligand>
        <name>heme b</name>
        <dbReference type="ChEBI" id="CHEBI:60344"/>
        <label>2</label>
    </ligand>
    <ligandPart>
        <name>Fe</name>
        <dbReference type="ChEBI" id="CHEBI:18248"/>
    </ligandPart>
</feature>
<feature type="binding site" description="axial binding residue" evidence="1">
    <location>
        <position position="480"/>
    </location>
    <ligand>
        <name>heme b</name>
        <dbReference type="ChEBI" id="CHEBI:60344"/>
        <label>1</label>
    </ligand>
    <ligandPart>
        <name>Fe</name>
        <dbReference type="ChEBI" id="CHEBI:18248"/>
    </ligandPart>
</feature>
<feature type="binding site" description="axial binding residue" evidence="1">
    <location>
        <position position="516"/>
    </location>
    <ligand>
        <name>heme b</name>
        <dbReference type="ChEBI" id="CHEBI:60344"/>
        <label>2</label>
    </ligand>
    <ligandPart>
        <name>Fe</name>
        <dbReference type="ChEBI" id="CHEBI:18248"/>
    </ligandPart>
</feature>
<feature type="glycosylation site" description="N-linked (GlcNAc...) asparagine" evidence="2">
    <location>
        <position position="127"/>
    </location>
</feature>
<feature type="glycosylation site" description="N-linked (GlcNAc...) asparagine" evidence="2">
    <location>
        <position position="158"/>
    </location>
</feature>
<reference key="1">
    <citation type="journal article" date="2000" name="Science">
        <title>The genome sequence of Drosophila melanogaster.</title>
        <authorList>
            <person name="Adams M.D."/>
            <person name="Celniker S.E."/>
            <person name="Holt R.A."/>
            <person name="Evans C.A."/>
            <person name="Gocayne J.D."/>
            <person name="Amanatides P.G."/>
            <person name="Scherer S.E."/>
            <person name="Li P.W."/>
            <person name="Hoskins R.A."/>
            <person name="Galle R.F."/>
            <person name="George R.A."/>
            <person name="Lewis S.E."/>
            <person name="Richards S."/>
            <person name="Ashburner M."/>
            <person name="Henderson S.N."/>
            <person name="Sutton G.G."/>
            <person name="Wortman J.R."/>
            <person name="Yandell M.D."/>
            <person name="Zhang Q."/>
            <person name="Chen L.X."/>
            <person name="Brandon R.C."/>
            <person name="Rogers Y.-H.C."/>
            <person name="Blazej R.G."/>
            <person name="Champe M."/>
            <person name="Pfeiffer B.D."/>
            <person name="Wan K.H."/>
            <person name="Doyle C."/>
            <person name="Baxter E.G."/>
            <person name="Helt G."/>
            <person name="Nelson C.R."/>
            <person name="Miklos G.L.G."/>
            <person name="Abril J.F."/>
            <person name="Agbayani A."/>
            <person name="An H.-J."/>
            <person name="Andrews-Pfannkoch C."/>
            <person name="Baldwin D."/>
            <person name="Ballew R.M."/>
            <person name="Basu A."/>
            <person name="Baxendale J."/>
            <person name="Bayraktaroglu L."/>
            <person name="Beasley E.M."/>
            <person name="Beeson K.Y."/>
            <person name="Benos P.V."/>
            <person name="Berman B.P."/>
            <person name="Bhandari D."/>
            <person name="Bolshakov S."/>
            <person name="Borkova D."/>
            <person name="Botchan M.R."/>
            <person name="Bouck J."/>
            <person name="Brokstein P."/>
            <person name="Brottier P."/>
            <person name="Burtis K.C."/>
            <person name="Busam D.A."/>
            <person name="Butler H."/>
            <person name="Cadieu E."/>
            <person name="Center A."/>
            <person name="Chandra I."/>
            <person name="Cherry J.M."/>
            <person name="Cawley S."/>
            <person name="Dahlke C."/>
            <person name="Davenport L.B."/>
            <person name="Davies P."/>
            <person name="de Pablos B."/>
            <person name="Delcher A."/>
            <person name="Deng Z."/>
            <person name="Mays A.D."/>
            <person name="Dew I."/>
            <person name="Dietz S.M."/>
            <person name="Dodson K."/>
            <person name="Doup L.E."/>
            <person name="Downes M."/>
            <person name="Dugan-Rocha S."/>
            <person name="Dunkov B.C."/>
            <person name="Dunn P."/>
            <person name="Durbin K.J."/>
            <person name="Evangelista C.C."/>
            <person name="Ferraz C."/>
            <person name="Ferriera S."/>
            <person name="Fleischmann W."/>
            <person name="Fosler C."/>
            <person name="Gabrielian A.E."/>
            <person name="Garg N.S."/>
            <person name="Gelbart W.M."/>
            <person name="Glasser K."/>
            <person name="Glodek A."/>
            <person name="Gong F."/>
            <person name="Gorrell J.H."/>
            <person name="Gu Z."/>
            <person name="Guan P."/>
            <person name="Harris M."/>
            <person name="Harris N.L."/>
            <person name="Harvey D.A."/>
            <person name="Heiman T.J."/>
            <person name="Hernandez J.R."/>
            <person name="Houck J."/>
            <person name="Hostin D."/>
            <person name="Houston K.A."/>
            <person name="Howland T.J."/>
            <person name="Wei M.-H."/>
            <person name="Ibegwam C."/>
            <person name="Jalali M."/>
            <person name="Kalush F."/>
            <person name="Karpen G.H."/>
            <person name="Ke Z."/>
            <person name="Kennison J.A."/>
            <person name="Ketchum K.A."/>
            <person name="Kimmel B.E."/>
            <person name="Kodira C.D."/>
            <person name="Kraft C.L."/>
            <person name="Kravitz S."/>
            <person name="Kulp D."/>
            <person name="Lai Z."/>
            <person name="Lasko P."/>
            <person name="Lei Y."/>
            <person name="Levitsky A.A."/>
            <person name="Li J.H."/>
            <person name="Li Z."/>
            <person name="Liang Y."/>
            <person name="Lin X."/>
            <person name="Liu X."/>
            <person name="Mattei B."/>
            <person name="McIntosh T.C."/>
            <person name="McLeod M.P."/>
            <person name="McPherson D."/>
            <person name="Merkulov G."/>
            <person name="Milshina N.V."/>
            <person name="Mobarry C."/>
            <person name="Morris J."/>
            <person name="Moshrefi A."/>
            <person name="Mount S.M."/>
            <person name="Moy M."/>
            <person name="Murphy B."/>
            <person name="Murphy L."/>
            <person name="Muzny D.M."/>
            <person name="Nelson D.L."/>
            <person name="Nelson D.R."/>
            <person name="Nelson K.A."/>
            <person name="Nixon K."/>
            <person name="Nusskern D.R."/>
            <person name="Pacleb J.M."/>
            <person name="Palazzolo M."/>
            <person name="Pittman G.S."/>
            <person name="Pan S."/>
            <person name="Pollard J."/>
            <person name="Puri V."/>
            <person name="Reese M.G."/>
            <person name="Reinert K."/>
            <person name="Remington K."/>
            <person name="Saunders R.D.C."/>
            <person name="Scheeler F."/>
            <person name="Shen H."/>
            <person name="Shue B.C."/>
            <person name="Siden-Kiamos I."/>
            <person name="Simpson M."/>
            <person name="Skupski M.P."/>
            <person name="Smith T.J."/>
            <person name="Spier E."/>
            <person name="Spradling A.C."/>
            <person name="Stapleton M."/>
            <person name="Strong R."/>
            <person name="Sun E."/>
            <person name="Svirskas R."/>
            <person name="Tector C."/>
            <person name="Turner R."/>
            <person name="Venter E."/>
            <person name="Wang A.H."/>
            <person name="Wang X."/>
            <person name="Wang Z.-Y."/>
            <person name="Wassarman D.A."/>
            <person name="Weinstock G.M."/>
            <person name="Weissenbach J."/>
            <person name="Williams S.M."/>
            <person name="Woodage T."/>
            <person name="Worley K.C."/>
            <person name="Wu D."/>
            <person name="Yang S."/>
            <person name="Yao Q.A."/>
            <person name="Ye J."/>
            <person name="Yeh R.-F."/>
            <person name="Zaveri J.S."/>
            <person name="Zhan M."/>
            <person name="Zhang G."/>
            <person name="Zhao Q."/>
            <person name="Zheng L."/>
            <person name="Zheng X.H."/>
            <person name="Zhong F.N."/>
            <person name="Zhong W."/>
            <person name="Zhou X."/>
            <person name="Zhu S.C."/>
            <person name="Zhu X."/>
            <person name="Smith H.O."/>
            <person name="Gibbs R.A."/>
            <person name="Myers E.W."/>
            <person name="Rubin G.M."/>
            <person name="Venter J.C."/>
        </authorList>
    </citation>
    <scope>NUCLEOTIDE SEQUENCE [LARGE SCALE GENOMIC DNA]</scope>
    <source>
        <strain>Berkeley</strain>
    </source>
</reference>
<reference key="2">
    <citation type="journal article" date="2002" name="Genome Biol.">
        <title>Annotation of the Drosophila melanogaster euchromatic genome: a systematic review.</title>
        <authorList>
            <person name="Misra S."/>
            <person name="Crosby M.A."/>
            <person name="Mungall C.J."/>
            <person name="Matthews B.B."/>
            <person name="Campbell K.S."/>
            <person name="Hradecky P."/>
            <person name="Huang Y."/>
            <person name="Kaminker J.S."/>
            <person name="Millburn G.H."/>
            <person name="Prochnik S.E."/>
            <person name="Smith C.D."/>
            <person name="Tupy J.L."/>
            <person name="Whitfield E.J."/>
            <person name="Bayraktaroglu L."/>
            <person name="Berman B.P."/>
            <person name="Bettencourt B.R."/>
            <person name="Celniker S.E."/>
            <person name="de Grey A.D.N.J."/>
            <person name="Drysdale R.A."/>
            <person name="Harris N.L."/>
            <person name="Richter J."/>
            <person name="Russo S."/>
            <person name="Schroeder A.J."/>
            <person name="Shu S.Q."/>
            <person name="Stapleton M."/>
            <person name="Yamada C."/>
            <person name="Ashburner M."/>
            <person name="Gelbart W.M."/>
            <person name="Rubin G.M."/>
            <person name="Lewis S.E."/>
        </authorList>
    </citation>
    <scope>GENOME REANNOTATION</scope>
    <source>
        <strain>Berkeley</strain>
    </source>
</reference>
<reference key="3">
    <citation type="journal article" date="2002" name="Genome Biol.">
        <title>A Drosophila full-length cDNA resource.</title>
        <authorList>
            <person name="Stapleton M."/>
            <person name="Carlson J.W."/>
            <person name="Brokstein P."/>
            <person name="Yu C."/>
            <person name="Champe M."/>
            <person name="George R.A."/>
            <person name="Guarin H."/>
            <person name="Kronmiller B."/>
            <person name="Pacleb J.M."/>
            <person name="Park S."/>
            <person name="Wan K.H."/>
            <person name="Rubin G.M."/>
            <person name="Celniker S.E."/>
        </authorList>
    </citation>
    <scope>NUCLEOTIDE SEQUENCE [LARGE SCALE MRNA]</scope>
    <source>
        <strain>Berkeley</strain>
        <tissue>Embryo</tissue>
    </source>
</reference>
<reference key="4">
    <citation type="journal article" date="2003" name="Biochim. Biophys. Acta">
        <title>Stromal cell-derived receptor 2 and cytochrome b561 are functional ferric reductases.</title>
        <authorList>
            <person name="Vargas J.D."/>
            <person name="Herpers B."/>
            <person name="McKie A.T."/>
            <person name="Gledhill S."/>
            <person name="McDonnell J."/>
            <person name="van den Heuvel M."/>
            <person name="Davies K.E."/>
            <person name="Ponting C.P."/>
        </authorList>
    </citation>
    <scope>FUNCTION</scope>
</reference>
<organism>
    <name type="scientific">Drosophila melanogaster</name>
    <name type="common">Fruit fly</name>
    <dbReference type="NCBI Taxonomy" id="7227"/>
    <lineage>
        <taxon>Eukaryota</taxon>
        <taxon>Metazoa</taxon>
        <taxon>Ecdysozoa</taxon>
        <taxon>Arthropoda</taxon>
        <taxon>Hexapoda</taxon>
        <taxon>Insecta</taxon>
        <taxon>Pterygota</taxon>
        <taxon>Neoptera</taxon>
        <taxon>Endopterygota</taxon>
        <taxon>Diptera</taxon>
        <taxon>Brachycera</taxon>
        <taxon>Muscomorpha</taxon>
        <taxon>Ephydroidea</taxon>
        <taxon>Drosophilidae</taxon>
        <taxon>Drosophila</taxon>
        <taxon>Sophophora</taxon>
    </lineage>
</organism>
<dbReference type="EC" id="1.-.-.-"/>
<dbReference type="EMBL" id="AE013599">
    <property type="protein sequence ID" value="AAF58074.2"/>
    <property type="molecule type" value="Genomic_DNA"/>
</dbReference>
<dbReference type="EMBL" id="AY118595">
    <property type="protein sequence ID" value="AAM49964.1"/>
    <property type="molecule type" value="mRNA"/>
</dbReference>
<dbReference type="RefSeq" id="NP_611079.2">
    <property type="nucleotide sequence ID" value="NM_137235.3"/>
</dbReference>
<dbReference type="SMR" id="Q8MSU3"/>
<dbReference type="FunCoup" id="Q8MSU3">
    <property type="interactions" value="128"/>
</dbReference>
<dbReference type="STRING" id="7227.FBpp0309032"/>
<dbReference type="TCDB" id="5.B.2.2.3">
    <property type="family name" value="the eukaryotic cytochrome b561 (cytb561) family"/>
</dbReference>
<dbReference type="GlyGen" id="Q8MSU3">
    <property type="glycosylation" value="3 sites"/>
</dbReference>
<dbReference type="SwissPalm" id="Q8MSU3"/>
<dbReference type="PaxDb" id="7227-FBpp0086349"/>
<dbReference type="DNASU" id="36768"/>
<dbReference type="EnsemblMetazoa" id="FBtr0087207">
    <property type="protein sequence ID" value="FBpp0086349"/>
    <property type="gene ID" value="FBgn0034067"/>
</dbReference>
<dbReference type="GeneID" id="36768"/>
<dbReference type="KEGG" id="dme:Dmel_CG8399"/>
<dbReference type="UCSC" id="CG8399-RA">
    <property type="organism name" value="d. melanogaster"/>
</dbReference>
<dbReference type="AGR" id="FB:FBgn0034067"/>
<dbReference type="FlyBase" id="FBgn0034067">
    <property type="gene designation" value="CG8399"/>
</dbReference>
<dbReference type="VEuPathDB" id="VectorBase:FBgn0034067"/>
<dbReference type="eggNOG" id="KOG4293">
    <property type="taxonomic scope" value="Eukaryota"/>
</dbReference>
<dbReference type="GeneTree" id="ENSGT00940000170494"/>
<dbReference type="HOGENOM" id="CLU_028305_0_0_1"/>
<dbReference type="InParanoid" id="Q8MSU3"/>
<dbReference type="OrthoDB" id="6372137at2759"/>
<dbReference type="PhylomeDB" id="Q8MSU3"/>
<dbReference type="BioGRID-ORCS" id="36768">
    <property type="hits" value="0 hits in 1 CRISPR screen"/>
</dbReference>
<dbReference type="GenomeRNAi" id="36768"/>
<dbReference type="PRO" id="PR:Q8MSU3"/>
<dbReference type="Proteomes" id="UP000000803">
    <property type="component" value="Chromosome 2R"/>
</dbReference>
<dbReference type="Bgee" id="FBgn0034067">
    <property type="expression patterns" value="Expressed in interfollicle cell in ovary and 91 other cell types or tissues"/>
</dbReference>
<dbReference type="ExpressionAtlas" id="Q8MSU3">
    <property type="expression patterns" value="baseline and differential"/>
</dbReference>
<dbReference type="GO" id="GO:0016020">
    <property type="term" value="C:membrane"/>
    <property type="evidence" value="ECO:0000314"/>
    <property type="project" value="FlyBase"/>
</dbReference>
<dbReference type="GO" id="GO:0046872">
    <property type="term" value="F:metal ion binding"/>
    <property type="evidence" value="ECO:0007669"/>
    <property type="project" value="UniProtKB-KW"/>
</dbReference>
<dbReference type="GO" id="GO:0016722">
    <property type="term" value="F:oxidoreductase activity, acting on metal ions"/>
    <property type="evidence" value="ECO:0000314"/>
    <property type="project" value="UniProtKB"/>
</dbReference>
<dbReference type="GO" id="GO:0140571">
    <property type="term" value="F:transmembrane ascorbate ferrireductase activity"/>
    <property type="evidence" value="ECO:0000314"/>
    <property type="project" value="FlyBase"/>
</dbReference>
<dbReference type="GO" id="GO:0006879">
    <property type="term" value="P:intracellular iron ion homeostasis"/>
    <property type="evidence" value="ECO:0000314"/>
    <property type="project" value="ARUK-UCL"/>
</dbReference>
<dbReference type="CDD" id="cd08760">
    <property type="entry name" value="Cyt_b561_FRRS1_like"/>
    <property type="match status" value="1"/>
</dbReference>
<dbReference type="CDD" id="cd09628">
    <property type="entry name" value="DOMON_SDR_2_like"/>
    <property type="match status" value="1"/>
</dbReference>
<dbReference type="CDD" id="cd08544">
    <property type="entry name" value="Reeler"/>
    <property type="match status" value="1"/>
</dbReference>
<dbReference type="FunFam" id="1.20.120.1770:FF:000006">
    <property type="entry name" value="Blast:Putative ferric-chelate reductase 1 homolog"/>
    <property type="match status" value="1"/>
</dbReference>
<dbReference type="FunFam" id="2.60.40.4060:FF:000007">
    <property type="entry name" value="Putative ferric-chelate reductase 1 homolog"/>
    <property type="match status" value="1"/>
</dbReference>
<dbReference type="Gene3D" id="1.20.120.1770">
    <property type="match status" value="1"/>
</dbReference>
<dbReference type="Gene3D" id="2.60.40.4060">
    <property type="entry name" value="Reeler domain"/>
    <property type="match status" value="1"/>
</dbReference>
<dbReference type="InterPro" id="IPR006593">
    <property type="entry name" value="Cyt_b561/ferric_Rdtase_TM"/>
</dbReference>
<dbReference type="InterPro" id="IPR005018">
    <property type="entry name" value="DOMON_domain"/>
</dbReference>
<dbReference type="InterPro" id="IPR051237">
    <property type="entry name" value="Ferric-chelate_Red/DefProt"/>
</dbReference>
<dbReference type="InterPro" id="IPR002861">
    <property type="entry name" value="Reeler_dom"/>
</dbReference>
<dbReference type="InterPro" id="IPR042307">
    <property type="entry name" value="Reeler_sf"/>
</dbReference>
<dbReference type="PANTHER" id="PTHR45828">
    <property type="entry name" value="CYTOCHROME B561/FERRIC REDUCTASE TRANSMEMBRANE"/>
    <property type="match status" value="1"/>
</dbReference>
<dbReference type="PANTHER" id="PTHR45828:SF38">
    <property type="entry name" value="FERRIC-CHELATE REDUCTASE 1 HOMOLOG-RELATED"/>
    <property type="match status" value="1"/>
</dbReference>
<dbReference type="Pfam" id="PF03351">
    <property type="entry name" value="DOMON"/>
    <property type="match status" value="1"/>
</dbReference>
<dbReference type="Pfam" id="PF02014">
    <property type="entry name" value="Reeler"/>
    <property type="match status" value="1"/>
</dbReference>
<dbReference type="SMART" id="SM00665">
    <property type="entry name" value="B561"/>
    <property type="match status" value="1"/>
</dbReference>
<dbReference type="SMART" id="SM00664">
    <property type="entry name" value="DoH"/>
    <property type="match status" value="1"/>
</dbReference>
<dbReference type="PROSITE" id="PS50939">
    <property type="entry name" value="CYTOCHROME_B561"/>
    <property type="match status" value="1"/>
</dbReference>
<dbReference type="PROSITE" id="PS50836">
    <property type="entry name" value="DOMON"/>
    <property type="match status" value="1"/>
</dbReference>
<dbReference type="PROSITE" id="PS51019">
    <property type="entry name" value="REELIN"/>
    <property type="match status" value="1"/>
</dbReference>
<gene>
    <name type="ORF">CG8399</name>
</gene>